<dbReference type="EC" id="3.2.2.n1"/>
<dbReference type="EMBL" id="AB006700">
    <property type="protein sequence ID" value="BAB08952.1"/>
    <property type="molecule type" value="Genomic_DNA"/>
</dbReference>
<dbReference type="EMBL" id="CP002688">
    <property type="protein sequence ID" value="AED91000.1"/>
    <property type="molecule type" value="Genomic_DNA"/>
</dbReference>
<dbReference type="EMBL" id="AK119117">
    <property type="protein sequence ID" value="BAC43688.1"/>
    <property type="status" value="ALT_INIT"/>
    <property type="molecule type" value="mRNA"/>
</dbReference>
<dbReference type="EMBL" id="BT003704">
    <property type="protein sequence ID" value="AAO39932.1"/>
    <property type="molecule type" value="mRNA"/>
</dbReference>
<dbReference type="RefSeq" id="NP_196248.3">
    <property type="nucleotide sequence ID" value="NM_120713.5"/>
</dbReference>
<dbReference type="SMR" id="Q8GW29"/>
<dbReference type="BioGRID" id="15797">
    <property type="interactions" value="1"/>
</dbReference>
<dbReference type="FunCoup" id="Q8GW29">
    <property type="interactions" value="2"/>
</dbReference>
<dbReference type="STRING" id="3702.Q8GW29"/>
<dbReference type="PaxDb" id="3702-AT5G06300.1"/>
<dbReference type="ProteomicsDB" id="238472"/>
<dbReference type="EnsemblPlants" id="AT5G06300.1">
    <property type="protein sequence ID" value="AT5G06300.1"/>
    <property type="gene ID" value="AT5G06300"/>
</dbReference>
<dbReference type="GeneID" id="830518"/>
<dbReference type="Gramene" id="AT5G06300.1">
    <property type="protein sequence ID" value="AT5G06300.1"/>
    <property type="gene ID" value="AT5G06300"/>
</dbReference>
<dbReference type="KEGG" id="ath:AT5G06300"/>
<dbReference type="Araport" id="AT5G06300"/>
<dbReference type="TAIR" id="AT5G06300">
    <property type="gene designation" value="LOG7"/>
</dbReference>
<dbReference type="eggNOG" id="ENOG502QSX6">
    <property type="taxonomic scope" value="Eukaryota"/>
</dbReference>
<dbReference type="HOGENOM" id="CLU_058336_2_0_1"/>
<dbReference type="InParanoid" id="Q8GW29"/>
<dbReference type="OMA" id="LIWEAEQ"/>
<dbReference type="OrthoDB" id="414463at2759"/>
<dbReference type="PhylomeDB" id="Q8GW29"/>
<dbReference type="BioCyc" id="ARA:AT5G06300-MONOMER"/>
<dbReference type="PRO" id="PR:Q8GW29"/>
<dbReference type="Proteomes" id="UP000006548">
    <property type="component" value="Chromosome 5"/>
</dbReference>
<dbReference type="ExpressionAtlas" id="Q8GW29">
    <property type="expression patterns" value="baseline and differential"/>
</dbReference>
<dbReference type="GO" id="GO:0005829">
    <property type="term" value="C:cytosol"/>
    <property type="evidence" value="ECO:0000314"/>
    <property type="project" value="TAIR"/>
</dbReference>
<dbReference type="GO" id="GO:0005634">
    <property type="term" value="C:nucleus"/>
    <property type="evidence" value="ECO:0000314"/>
    <property type="project" value="TAIR"/>
</dbReference>
<dbReference type="GO" id="GO:0102682">
    <property type="term" value="F:cytokinin riboside 5'-monophosphate phosphoribohydrolase activity"/>
    <property type="evidence" value="ECO:0007669"/>
    <property type="project" value="RHEA"/>
</dbReference>
<dbReference type="GO" id="GO:0009691">
    <property type="term" value="P:cytokinin biosynthetic process"/>
    <property type="evidence" value="ECO:0007669"/>
    <property type="project" value="UniProtKB-KW"/>
</dbReference>
<dbReference type="FunFam" id="3.40.50.450:FF:000005">
    <property type="entry name" value="CASP-like protein"/>
    <property type="match status" value="1"/>
</dbReference>
<dbReference type="Gene3D" id="3.40.50.450">
    <property type="match status" value="1"/>
</dbReference>
<dbReference type="InterPro" id="IPR005269">
    <property type="entry name" value="LOG"/>
</dbReference>
<dbReference type="InterPro" id="IPR031100">
    <property type="entry name" value="LOG_fam"/>
</dbReference>
<dbReference type="NCBIfam" id="TIGR00730">
    <property type="entry name" value="Rossman fold protein, TIGR00730 family"/>
    <property type="match status" value="1"/>
</dbReference>
<dbReference type="PANTHER" id="PTHR31223">
    <property type="entry name" value="LOG FAMILY PROTEIN YJL055W"/>
    <property type="match status" value="1"/>
</dbReference>
<dbReference type="PANTHER" id="PTHR31223:SF70">
    <property type="entry name" value="LOG FAMILY PROTEIN YJL055W"/>
    <property type="match status" value="1"/>
</dbReference>
<dbReference type="Pfam" id="PF03641">
    <property type="entry name" value="Lysine_decarbox"/>
    <property type="match status" value="1"/>
</dbReference>
<dbReference type="SUPFAM" id="SSF102405">
    <property type="entry name" value="MCP/YpsA-like"/>
    <property type="match status" value="1"/>
</dbReference>
<comment type="function">
    <text evidence="2">Cytokinin-activating enzyme working in the direct activation pathway. Phosphoribohydrolase that converts inactive cytokinin nucleotides to the biologically active free-base forms.</text>
</comment>
<comment type="catalytic activity">
    <reaction evidence="2">
        <text>N(6)-(dimethylallyl)adenosine 5'-phosphate + H2O = N(6)-dimethylallyladenine + D-ribose 5-phosphate</text>
        <dbReference type="Rhea" id="RHEA:48560"/>
        <dbReference type="ChEBI" id="CHEBI:15377"/>
        <dbReference type="ChEBI" id="CHEBI:17660"/>
        <dbReference type="ChEBI" id="CHEBI:57526"/>
        <dbReference type="ChEBI" id="CHEBI:78346"/>
        <dbReference type="EC" id="3.2.2.n1"/>
    </reaction>
</comment>
<comment type="catalytic activity">
    <reaction evidence="2">
        <text>9-ribosyl-trans-zeatin 5'-phosphate + H2O = trans-zeatin + D-ribose 5-phosphate</text>
        <dbReference type="Rhea" id="RHEA:48564"/>
        <dbReference type="ChEBI" id="CHEBI:15377"/>
        <dbReference type="ChEBI" id="CHEBI:16522"/>
        <dbReference type="ChEBI" id="CHEBI:78346"/>
        <dbReference type="ChEBI" id="CHEBI:87947"/>
        <dbReference type="EC" id="3.2.2.n1"/>
    </reaction>
</comment>
<comment type="biophysicochemical properties">
    <kinetics>
        <KM evidence="2">6.7 uM for N(6)-(Delta(2)-isopentenyl)-adenosine 5'-phosphate</KM>
        <Vmax evidence="2">3.8 umol/min/mg enzyme with N(6)-(Delta(2)-isopentenyl)-adenosine 5'-phosphate as substrate</Vmax>
        <text>can also use benzyladenosine 5'-phosphate as substrate.</text>
    </kinetics>
    <phDependence>
        <text evidence="2">Optimum pH is 6.5.</text>
    </phDependence>
</comment>
<comment type="subcellular location">
    <subcellularLocation>
        <location evidence="2">Cytoplasm</location>
    </subcellularLocation>
    <subcellularLocation>
        <location evidence="2">Nucleus</location>
    </subcellularLocation>
</comment>
<comment type="tissue specificity">
    <text evidence="2">Expressed in roots and shoots. Detected in the epidermis of the root elongation zone, cotyledon and leaves, in trichomes and pollen.</text>
</comment>
<comment type="disruption phenotype">
    <text evidence="2">No visible phenotype under normal growth conditions; due to the redundancy with other LOG proteins.</text>
</comment>
<comment type="similarity">
    <text evidence="3">Belongs to the LOG family.</text>
</comment>
<comment type="sequence caution" evidence="3">
    <conflict type="erroneous initiation">
        <sequence resource="EMBL-CDS" id="BAC43688"/>
    </conflict>
    <text>Truncated N-terminus.</text>
</comment>
<keyword id="KW-0203">Cytokinin biosynthesis</keyword>
<keyword id="KW-0963">Cytoplasm</keyword>
<keyword id="KW-0378">Hydrolase</keyword>
<keyword id="KW-0539">Nucleus</keyword>
<keyword id="KW-1185">Reference proteome</keyword>
<reference key="1">
    <citation type="journal article" date="1997" name="DNA Res.">
        <title>Structural analysis of Arabidopsis thaliana chromosome 5. II. Sequence features of the regions of 1,044,062 bp covered by thirteen physically assigned P1 clones.</title>
        <authorList>
            <person name="Kotani H."/>
            <person name="Nakamura Y."/>
            <person name="Sato S."/>
            <person name="Kaneko T."/>
            <person name="Asamizu E."/>
            <person name="Miyajima N."/>
            <person name="Tabata S."/>
        </authorList>
    </citation>
    <scope>NUCLEOTIDE SEQUENCE [LARGE SCALE GENOMIC DNA]</scope>
    <source>
        <strain>cv. Columbia</strain>
    </source>
</reference>
<reference key="2">
    <citation type="journal article" date="2017" name="Plant J.">
        <title>Araport11: a complete reannotation of the Arabidopsis thaliana reference genome.</title>
        <authorList>
            <person name="Cheng C.Y."/>
            <person name="Krishnakumar V."/>
            <person name="Chan A.P."/>
            <person name="Thibaud-Nissen F."/>
            <person name="Schobel S."/>
            <person name="Town C.D."/>
        </authorList>
    </citation>
    <scope>GENOME REANNOTATION</scope>
    <source>
        <strain>cv. Columbia</strain>
    </source>
</reference>
<reference key="3">
    <citation type="journal article" date="2002" name="Science">
        <title>Functional annotation of a full-length Arabidopsis cDNA collection.</title>
        <authorList>
            <person name="Seki M."/>
            <person name="Narusaka M."/>
            <person name="Kamiya A."/>
            <person name="Ishida J."/>
            <person name="Satou M."/>
            <person name="Sakurai T."/>
            <person name="Nakajima M."/>
            <person name="Enju A."/>
            <person name="Akiyama K."/>
            <person name="Oono Y."/>
            <person name="Muramatsu M."/>
            <person name="Hayashizaki Y."/>
            <person name="Kawai J."/>
            <person name="Carninci P."/>
            <person name="Itoh M."/>
            <person name="Ishii Y."/>
            <person name="Arakawa T."/>
            <person name="Shibata K."/>
            <person name="Shinagawa A."/>
            <person name="Shinozaki K."/>
        </authorList>
    </citation>
    <scope>NUCLEOTIDE SEQUENCE [LARGE SCALE MRNA] OF 4-217</scope>
    <source>
        <strain>cv. Columbia</strain>
    </source>
</reference>
<reference key="4">
    <citation type="journal article" date="2003" name="Science">
        <title>Empirical analysis of transcriptional activity in the Arabidopsis genome.</title>
        <authorList>
            <person name="Yamada K."/>
            <person name="Lim J."/>
            <person name="Dale J.M."/>
            <person name="Chen H."/>
            <person name="Shinn P."/>
            <person name="Palm C.J."/>
            <person name="Southwick A.M."/>
            <person name="Wu H.C."/>
            <person name="Kim C.J."/>
            <person name="Nguyen M."/>
            <person name="Pham P.K."/>
            <person name="Cheuk R.F."/>
            <person name="Karlin-Newmann G."/>
            <person name="Liu S.X."/>
            <person name="Lam B."/>
            <person name="Sakano H."/>
            <person name="Wu T."/>
            <person name="Yu G."/>
            <person name="Miranda M."/>
            <person name="Quach H.L."/>
            <person name="Tripp M."/>
            <person name="Chang C.H."/>
            <person name="Lee J.M."/>
            <person name="Toriumi M.J."/>
            <person name="Chan M.M."/>
            <person name="Tang C.C."/>
            <person name="Onodera C.S."/>
            <person name="Deng J.M."/>
            <person name="Akiyama K."/>
            <person name="Ansari Y."/>
            <person name="Arakawa T."/>
            <person name="Banh J."/>
            <person name="Banno F."/>
            <person name="Bowser L."/>
            <person name="Brooks S.Y."/>
            <person name="Carninci P."/>
            <person name="Chao Q."/>
            <person name="Choy N."/>
            <person name="Enju A."/>
            <person name="Goldsmith A.D."/>
            <person name="Gurjal M."/>
            <person name="Hansen N.F."/>
            <person name="Hayashizaki Y."/>
            <person name="Johnson-Hopson C."/>
            <person name="Hsuan V.W."/>
            <person name="Iida K."/>
            <person name="Karnes M."/>
            <person name="Khan S."/>
            <person name="Koesema E."/>
            <person name="Ishida J."/>
            <person name="Jiang P.X."/>
            <person name="Jones T."/>
            <person name="Kawai J."/>
            <person name="Kamiya A."/>
            <person name="Meyers C."/>
            <person name="Nakajima M."/>
            <person name="Narusaka M."/>
            <person name="Seki M."/>
            <person name="Sakurai T."/>
            <person name="Satou M."/>
            <person name="Tamse R."/>
            <person name="Vaysberg M."/>
            <person name="Wallender E.K."/>
            <person name="Wong C."/>
            <person name="Yamamura Y."/>
            <person name="Yuan S."/>
            <person name="Shinozaki K."/>
            <person name="Davis R.W."/>
            <person name="Theologis A."/>
            <person name="Ecker J.R."/>
        </authorList>
    </citation>
    <scope>NUCLEOTIDE SEQUENCE [LARGE SCALE MRNA] OF 53-217</scope>
    <source>
        <strain>cv. Columbia</strain>
    </source>
</reference>
<reference key="5">
    <citation type="journal article" date="2007" name="Nature">
        <title>Direct control of shoot meristem activity by a cytokinin-activating enzyme.</title>
        <authorList>
            <person name="Kurakawa T."/>
            <person name="Ueda N."/>
            <person name="Maekawa M."/>
            <person name="Kobayashi K."/>
            <person name="Kojima M."/>
            <person name="Nagato Y."/>
            <person name="Sakakibara H."/>
            <person name="Kyozuka J."/>
        </authorList>
    </citation>
    <scope>IDENTIFICATION</scope>
</reference>
<reference key="6">
    <citation type="journal article" date="2009" name="Plant Cell">
        <title>Functional analyses of LONELY GUY cytokinin-activating enzymes reveal the importance of the direct activation pathway in Arabidopsis.</title>
        <authorList>
            <person name="Kuroha T."/>
            <person name="Tokunaga H."/>
            <person name="Kojima M."/>
            <person name="Ueda N."/>
            <person name="Ishida T."/>
            <person name="Nagawa S."/>
            <person name="Fukuda H."/>
            <person name="Sugimoto K."/>
            <person name="Sakakibara H."/>
        </authorList>
    </citation>
    <scope>FUNCTION</scope>
    <scope>CATALYTIC ACTIVITY</scope>
    <scope>BIOPHYSICOCHEMICAL PROPERTIES</scope>
    <scope>DISRUPTION PHENOTYPE</scope>
    <scope>TISSUE SPECIFICITY</scope>
    <scope>SUBCELLULAR LOCATION</scope>
    <scope>GENE FAMILY</scope>
    <scope>NOMENCLATURE</scope>
</reference>
<organism>
    <name type="scientific">Arabidopsis thaliana</name>
    <name type="common">Mouse-ear cress</name>
    <dbReference type="NCBI Taxonomy" id="3702"/>
    <lineage>
        <taxon>Eukaryota</taxon>
        <taxon>Viridiplantae</taxon>
        <taxon>Streptophyta</taxon>
        <taxon>Embryophyta</taxon>
        <taxon>Tracheophyta</taxon>
        <taxon>Spermatophyta</taxon>
        <taxon>Magnoliopsida</taxon>
        <taxon>eudicotyledons</taxon>
        <taxon>Gunneridae</taxon>
        <taxon>Pentapetalae</taxon>
        <taxon>rosids</taxon>
        <taxon>malvids</taxon>
        <taxon>Brassicales</taxon>
        <taxon>Brassicaceae</taxon>
        <taxon>Camelineae</taxon>
        <taxon>Arabidopsis</taxon>
    </lineage>
</organism>
<sequence>MEETKSRFKRICVFCGSSSGKKPSYQEAAIQLGNELVERRIDLVYGGGSVGLMGLVSQAVHHGGRHVLGVIPKTLMPREITGETIGEVKAVADMHQRKAEMARQADAFIALPGGYGTLEELLEVITWAQLGIHRKPVGLLNVDGYYNSLLTFIDKAVDEGFISPMARRIIVSAPNAKELVRQLEEYEPEFDEITSKLVWDEVDRISYVPGSEVATAT</sequence>
<accession>Q8GW29</accession>
<accession>Q9FNH8</accession>
<gene>
    <name type="primary">LOG7</name>
    <name type="ordered locus">At5g06300</name>
    <name type="ORF">MHF15.18</name>
</gene>
<protein>
    <recommendedName>
        <fullName>Cytokinin riboside 5'-monophosphate phosphoribohydrolase LOG7</fullName>
        <ecNumber>3.2.2.n1</ecNumber>
    </recommendedName>
    <alternativeName>
        <fullName>Protein LONELY GUY 7</fullName>
    </alternativeName>
</protein>
<proteinExistence type="evidence at protein level"/>
<name>LOG7_ARATH</name>
<feature type="chain" id="PRO_0000395050" description="Cytokinin riboside 5'-monophosphate phosphoribohydrolase LOG7">
    <location>
        <begin position="1"/>
        <end position="217"/>
    </location>
</feature>
<feature type="binding site" evidence="1">
    <location>
        <position position="79"/>
    </location>
    <ligand>
        <name>substrate</name>
    </ligand>
</feature>
<feature type="binding site" evidence="1">
    <location>
        <begin position="97"/>
        <end position="98"/>
    </location>
    <ligand>
        <name>substrate</name>
    </ligand>
</feature>
<feature type="binding site" evidence="1">
    <location>
        <begin position="114"/>
        <end position="120"/>
    </location>
    <ligand>
        <name>substrate</name>
    </ligand>
</feature>
<feature type="binding site" evidence="1">
    <location>
        <position position="126"/>
    </location>
    <ligand>
        <name>substrate</name>
    </ligand>
</feature>
<evidence type="ECO:0000250" key="1">
    <source>
        <dbReference type="UniProtKB" id="B2HS63"/>
    </source>
</evidence>
<evidence type="ECO:0000269" key="2">
    <source>
    </source>
</evidence>
<evidence type="ECO:0000305" key="3"/>